<organism>
    <name type="scientific">Xenopus laevis</name>
    <name type="common">African clawed frog</name>
    <dbReference type="NCBI Taxonomy" id="8355"/>
    <lineage>
        <taxon>Eukaryota</taxon>
        <taxon>Metazoa</taxon>
        <taxon>Chordata</taxon>
        <taxon>Craniata</taxon>
        <taxon>Vertebrata</taxon>
        <taxon>Euteleostomi</taxon>
        <taxon>Amphibia</taxon>
        <taxon>Batrachia</taxon>
        <taxon>Anura</taxon>
        <taxon>Pipoidea</taxon>
        <taxon>Pipidae</taxon>
        <taxon>Xenopodinae</taxon>
        <taxon>Xenopus</taxon>
        <taxon>Xenopus</taxon>
    </lineage>
</organism>
<proteinExistence type="evidence at protein level"/>
<dbReference type="EMBL" id="AJ853463">
    <property type="protein sequence ID" value="CAH68561.1"/>
    <property type="molecule type" value="mRNA"/>
</dbReference>
<dbReference type="EMBL" id="AJ971473">
    <property type="protein sequence ID" value="CAI96561.1"/>
    <property type="molecule type" value="mRNA"/>
</dbReference>
<dbReference type="EMBL" id="AJ971474">
    <property type="protein sequence ID" value="CAI96562.1"/>
    <property type="molecule type" value="mRNA"/>
</dbReference>
<dbReference type="RefSeq" id="NP_001089002.1">
    <property type="nucleotide sequence ID" value="NM_001095533.1"/>
</dbReference>
<dbReference type="RefSeq" id="NP_001090174.1">
    <molecule id="Q5W1J5-3"/>
    <property type="nucleotide sequence ID" value="NM_001096705.1"/>
</dbReference>
<dbReference type="SMR" id="Q5W1J5"/>
<dbReference type="GeneID" id="496386"/>
<dbReference type="KEGG" id="xla:496386"/>
<dbReference type="CTD" id="496386"/>
<dbReference type="CTD" id="779033"/>
<dbReference type="OrthoDB" id="5830876at2759"/>
<dbReference type="Proteomes" id="UP000186698">
    <property type="component" value="Chromosome 4S"/>
</dbReference>
<dbReference type="Bgee" id="496386">
    <property type="expression patterns" value="Expressed in stomach and 18 other cell types or tissues"/>
</dbReference>
<dbReference type="GO" id="GO:0005634">
    <property type="term" value="C:nucleus"/>
    <property type="evidence" value="ECO:0000318"/>
    <property type="project" value="GO_Central"/>
</dbReference>
<dbReference type="GO" id="GO:0003677">
    <property type="term" value="F:DNA binding"/>
    <property type="evidence" value="ECO:0000250"/>
    <property type="project" value="UniProtKB"/>
</dbReference>
<dbReference type="GO" id="GO:0001227">
    <property type="term" value="F:DNA-binding transcription repressor activity, RNA polymerase II-specific"/>
    <property type="evidence" value="ECO:0000318"/>
    <property type="project" value="GO_Central"/>
</dbReference>
<dbReference type="GO" id="GO:0000978">
    <property type="term" value="F:RNA polymerase II cis-regulatory region sequence-specific DNA binding"/>
    <property type="evidence" value="ECO:0000318"/>
    <property type="project" value="GO_Central"/>
</dbReference>
<dbReference type="GO" id="GO:0001222">
    <property type="term" value="F:transcription corepressor binding"/>
    <property type="evidence" value="ECO:0000353"/>
    <property type="project" value="UniProtKB"/>
</dbReference>
<dbReference type="GO" id="GO:0008270">
    <property type="term" value="F:zinc ion binding"/>
    <property type="evidence" value="ECO:0007669"/>
    <property type="project" value="UniProtKB-KW"/>
</dbReference>
<dbReference type="GO" id="GO:0045892">
    <property type="term" value="P:negative regulation of DNA-templated transcription"/>
    <property type="evidence" value="ECO:0000250"/>
    <property type="project" value="UniProtKB"/>
</dbReference>
<dbReference type="GO" id="GO:0000122">
    <property type="term" value="P:negative regulation of transcription by RNA polymerase II"/>
    <property type="evidence" value="ECO:0000250"/>
    <property type="project" value="UniProtKB"/>
</dbReference>
<dbReference type="GO" id="GO:0006357">
    <property type="term" value="P:regulation of transcription by RNA polymerase II"/>
    <property type="evidence" value="ECO:0000318"/>
    <property type="project" value="GO_Central"/>
</dbReference>
<dbReference type="CDD" id="cd20065">
    <property type="entry name" value="FH_FOXP2"/>
    <property type="match status" value="1"/>
</dbReference>
<dbReference type="FunFam" id="1.20.5.340:FF:000005">
    <property type="entry name" value="Forkhead box P1, isoform CRA_f"/>
    <property type="match status" value="1"/>
</dbReference>
<dbReference type="FunFam" id="1.10.10.10:FF:000010">
    <property type="entry name" value="Forkhead box P2 isoform B"/>
    <property type="match status" value="1"/>
</dbReference>
<dbReference type="Gene3D" id="1.20.5.340">
    <property type="match status" value="1"/>
</dbReference>
<dbReference type="Gene3D" id="1.10.10.10">
    <property type="entry name" value="Winged helix-like DNA-binding domain superfamily/Winged helix DNA-binding domain"/>
    <property type="match status" value="1"/>
</dbReference>
<dbReference type="InterPro" id="IPR047412">
    <property type="entry name" value="FH_FOXP1_P2"/>
</dbReference>
<dbReference type="InterPro" id="IPR001766">
    <property type="entry name" value="Fork_head_dom"/>
</dbReference>
<dbReference type="InterPro" id="IPR050998">
    <property type="entry name" value="FOXP"/>
</dbReference>
<dbReference type="InterPro" id="IPR032354">
    <property type="entry name" value="FOXP-CC"/>
</dbReference>
<dbReference type="InterPro" id="IPR030456">
    <property type="entry name" value="TF_fork_head_CS_2"/>
</dbReference>
<dbReference type="InterPro" id="IPR036388">
    <property type="entry name" value="WH-like_DNA-bd_sf"/>
</dbReference>
<dbReference type="InterPro" id="IPR036390">
    <property type="entry name" value="WH_DNA-bd_sf"/>
</dbReference>
<dbReference type="PANTHER" id="PTHR45796">
    <property type="entry name" value="FORKHEAD BOX P, ISOFORM C"/>
    <property type="match status" value="1"/>
</dbReference>
<dbReference type="PANTHER" id="PTHR45796:SF3">
    <property type="entry name" value="FORKHEAD BOX PROTEIN P1"/>
    <property type="match status" value="1"/>
</dbReference>
<dbReference type="Pfam" id="PF00250">
    <property type="entry name" value="Forkhead"/>
    <property type="match status" value="1"/>
</dbReference>
<dbReference type="Pfam" id="PF16159">
    <property type="entry name" value="FOXP-CC"/>
    <property type="match status" value="1"/>
</dbReference>
<dbReference type="PRINTS" id="PR00053">
    <property type="entry name" value="FORKHEAD"/>
</dbReference>
<dbReference type="SMART" id="SM00339">
    <property type="entry name" value="FH"/>
    <property type="match status" value="1"/>
</dbReference>
<dbReference type="SUPFAM" id="SSF46785">
    <property type="entry name" value="Winged helix' DNA-binding domain"/>
    <property type="match status" value="1"/>
</dbReference>
<dbReference type="PROSITE" id="PS00658">
    <property type="entry name" value="FORK_HEAD_2"/>
    <property type="match status" value="1"/>
</dbReference>
<dbReference type="PROSITE" id="PS50039">
    <property type="entry name" value="FORK_HEAD_3"/>
    <property type="match status" value="1"/>
</dbReference>
<dbReference type="PROSITE" id="PS00028">
    <property type="entry name" value="ZINC_FINGER_C2H2_1"/>
    <property type="match status" value="1"/>
</dbReference>
<comment type="function">
    <text evidence="1">Transcriptional repressor.</text>
</comment>
<comment type="subunit">
    <text evidence="1 6">Dimerization is required for DNA-binding (By similarity). Isoform a, but not isoform b, interacts with ctbp1.</text>
</comment>
<comment type="subcellular location">
    <subcellularLocation>
        <location evidence="2 8">Nucleus</location>
    </subcellularLocation>
</comment>
<comment type="alternative products">
    <event type="alternative splicing"/>
    <isoform>
        <id>Q5W1J5-1</id>
        <name evidence="5">a</name>
        <sequence type="displayed"/>
    </isoform>
    <isoform>
        <id>Q5W1J5-2</id>
        <name evidence="6">b</name>
        <sequence type="described" ref="VSP_052125"/>
    </isoform>
    <isoform>
        <id>Q5W1J5-3</id>
        <name evidence="6">c</name>
        <sequence type="described" ref="VSP_052122 VSP_052123 VSP_052124"/>
    </isoform>
</comment>
<comment type="tissue specificity">
    <text evidence="5 6">All isoforms show similar spatial expression. Localized to the animal hemisphere of early cleavage stage embryos. At tailbud stages, expressed in regions of the brain, eye and the splanchnic mesodermal layer of the lateral plate mesoderm surrounding the gut. At stage 35, expressed within the lens of the eye, in distinct regions of the head mesenchyme and in the area anterior to the gut. In the brain the anterior-most expression is restricted to the outer region of the mesencephalon. With ongoing development, additional expression is found in the curling gut.</text>
</comment>
<comment type="developmental stage">
    <text evidence="5 6">Isoform a and isoform b are expressed both maternally and zygotically. Maternal expression disappears before gastrulation and zygotic expression begins after stage 20 and continues throughout embryogenesis. In contrast, isoform c is only detected from stage 30.</text>
</comment>
<comment type="domain">
    <text evidence="1">The leucine-zipper is required for dimerization and transcriptional repression.</text>
</comment>
<accession>Q5W1J5</accession>
<accession>Q4VYS2</accession>
<accession>Q4VYS3</accession>
<gene>
    <name evidence="9" type="primary">foxp1</name>
</gene>
<evidence type="ECO:0000250" key="1">
    <source>
        <dbReference type="UniProtKB" id="P58462"/>
    </source>
</evidence>
<evidence type="ECO:0000255" key="2"/>
<evidence type="ECO:0000255" key="3">
    <source>
        <dbReference type="PROSITE-ProRule" id="PRU00089"/>
    </source>
</evidence>
<evidence type="ECO:0000256" key="4">
    <source>
        <dbReference type="SAM" id="MobiDB-lite"/>
    </source>
</evidence>
<evidence type="ECO:0000269" key="5">
    <source>
    </source>
</evidence>
<evidence type="ECO:0000269" key="6">
    <source>
    </source>
</evidence>
<evidence type="ECO:0000303" key="7">
    <source>
    </source>
</evidence>
<evidence type="ECO:0000305" key="8"/>
<evidence type="ECO:0000312" key="9">
    <source>
        <dbReference type="EMBL" id="CAH68561.1"/>
    </source>
</evidence>
<evidence type="ECO:0000312" key="10">
    <source>
        <dbReference type="EMBL" id="CAI96562.1"/>
    </source>
</evidence>
<reference evidence="8 9" key="1">
    <citation type="journal article" date="2005" name="Int. J. Dev. Biol.">
        <title>The Fox gene family in Xenopus laevis: FoxI2, FoxM1 and FoxP1 in early development.</title>
        <authorList>
            <person name="Pohl B.S."/>
            <person name="Roessner A."/>
            <person name="Knoechel W."/>
        </authorList>
    </citation>
    <scope>NUCLEOTIDE SEQUENCE [MRNA] (ISOFORM A)</scope>
    <scope>TISSUE SPECIFICITY</scope>
    <scope>DEVELOPMENTAL STAGE</scope>
    <source>
        <tissue evidence="5">Embryo</tissue>
    </source>
</reference>
<reference evidence="8 10" key="2">
    <citation type="journal article" date="2006" name="Dev. Genes Evol.">
        <title>The FoxP subclass in Xenopus laevis development.</title>
        <authorList>
            <person name="Schoen C."/>
            <person name="Wochnik A."/>
            <person name="Roessner A."/>
            <person name="Donow C."/>
            <person name="Knoechel W."/>
        </authorList>
    </citation>
    <scope>NUCLEOTIDE SEQUENCE [MRNA] (ISOFORMS B AND C)</scope>
    <scope>ALTERNATIVE SPLICING</scope>
    <scope>INTERACTION WITH CTBP1</scope>
    <scope>TISSUE SPECIFICITY</scope>
    <scope>DEVELOPMENTAL STAGE</scope>
    <source>
        <tissue evidence="6">Tadpole</tissue>
    </source>
</reference>
<protein>
    <recommendedName>
        <fullName>Forkhead box protein P1</fullName>
    </recommendedName>
    <alternativeName>
        <fullName>XlFoxP1</fullName>
    </alternativeName>
</protein>
<sequence>MMTPQVITPQQMQQILQQQVLTPQQLQVLLQQQQALMLQQQLQEFYKKQQEQLQLQLLQQQHAGKQPKEQQQQQQVATQQLAFQQQLLQMQQLQQQHLLTLQRQGLLSIQPGQPTLPLQSLAQGMIPAELQQLWKEVTGSHTADDVVCNNHSTLDLSTTCVSSTAQPKTSLLLNSQASTNGQASVLTLKRESSSHEEYTHNHPLYGHGVCKWPGCETICEDFPSFLKHLNSEHALDDRSTAQCRVQMQVVQQLELQLSKDKERLQAMMSHLHVKSTEPKASPQPLNLVSSATLSKTASEASPQSLPHTPTTPTAPLTPITQGPSVITTTSIHNVGPIRRRYSDKYNIPISSDFAQNQEFYKNAEVRPPFTYASLIRQGILESPEKQLTLNEIYNWFTRQFAYFRRNAATWKNAVRHNLSLHKCFVRVENVKGAVWTVDEMEFQKRRPQKISGSPTLIKNIQTSHAYCSPLSAALQASMAENSLPLYTTASMGNPALNSLANAIREDLNGVMEHTSSNGSDSSPGRSPMQGMHQVHVKEEPLDHDDNDGPLSLVTTANHSPDFDRDRDYEDDPVNDDME</sequence>
<name>FOXP1_XENLA</name>
<keyword id="KW-0025">Alternative splicing</keyword>
<keyword id="KW-0238">DNA-binding</keyword>
<keyword id="KW-0479">Metal-binding</keyword>
<keyword id="KW-0539">Nucleus</keyword>
<keyword id="KW-1185">Reference proteome</keyword>
<keyword id="KW-0678">Repressor</keyword>
<keyword id="KW-0804">Transcription</keyword>
<keyword id="KW-0805">Transcription regulation</keyword>
<keyword id="KW-0862">Zinc</keyword>
<keyword id="KW-0863">Zinc-finger</keyword>
<feature type="chain" id="PRO_0000247651" description="Forkhead box protein P1">
    <location>
        <begin position="1"/>
        <end position="578"/>
    </location>
</feature>
<feature type="zinc finger region" description="C2H2-type" evidence="2">
    <location>
        <begin position="208"/>
        <end position="233"/>
    </location>
</feature>
<feature type="DNA-binding region" description="Fork-head" evidence="3">
    <location>
        <begin position="366"/>
        <end position="456"/>
    </location>
</feature>
<feature type="region of interest" description="Leucine-zipper">
    <location>
        <begin position="250"/>
        <end position="271"/>
    </location>
</feature>
<feature type="region of interest" description="Ctbp1-binding" evidence="1">
    <location>
        <begin position="284"/>
        <end position="288"/>
    </location>
</feature>
<feature type="region of interest" description="Disordered" evidence="4">
    <location>
        <begin position="293"/>
        <end position="325"/>
    </location>
</feature>
<feature type="region of interest" description="Disordered" evidence="4">
    <location>
        <begin position="511"/>
        <end position="578"/>
    </location>
</feature>
<feature type="compositionally biased region" description="Polar residues" evidence="4">
    <location>
        <begin position="293"/>
        <end position="305"/>
    </location>
</feature>
<feature type="compositionally biased region" description="Low complexity" evidence="4">
    <location>
        <begin position="306"/>
        <end position="320"/>
    </location>
</feature>
<feature type="compositionally biased region" description="Low complexity" evidence="4">
    <location>
        <begin position="515"/>
        <end position="527"/>
    </location>
</feature>
<feature type="compositionally biased region" description="Acidic residues" evidence="4">
    <location>
        <begin position="568"/>
        <end position="578"/>
    </location>
</feature>
<feature type="splice variant" id="VSP_052122" description="In isoform c." evidence="7">
    <original>M</original>
    <variation>MMQESGTETKSNDSVIQNGAGPGNHLLECTLRESRSNGETPLEVGAVELAHLQQQQALQAARQLLINQQPFSGIKANKRNDKHPSLQVPVSVAM</variation>
    <location>
        <position position="1"/>
    </location>
</feature>
<feature type="splice variant" id="VSP_052123" description="In isoform c." evidence="7">
    <original>LSKDKER</original>
    <variation>VKHSGAS</variation>
    <location>
        <begin position="257"/>
        <end position="263"/>
    </location>
</feature>
<feature type="splice variant" id="VSP_052124" description="In isoform c." evidence="7">
    <location>
        <begin position="264"/>
        <end position="578"/>
    </location>
</feature>
<feature type="splice variant" id="VSP_052125" description="In isoform b." evidence="7">
    <original>P</original>
    <variation>PQLCTTFGRENGWICYSQQLEEGITGILKG</variation>
    <location>
        <position position="284"/>
    </location>
</feature>
<feature type="sequence conflict" description="In Ref. 2; CAI96561." evidence="8" ref="2">
    <original>R</original>
    <variation>P</variation>
    <location>
        <position position="564"/>
    </location>
</feature>
<feature type="sequence conflict" description="In Ref. 2; CAI96561." evidence="8" ref="2">
    <original>D</original>
    <variation>E</variation>
    <location>
        <position position="571"/>
    </location>
</feature>
<feature type="sequence conflict" description="In Ref. 2; CAI96561." evidence="8" ref="2">
    <original>D</original>
    <variation>E</variation>
    <location>
        <position position="575"/>
    </location>
</feature>